<keyword id="KW-0963">Cytoplasm</keyword>
<keyword id="KW-0520">NAD</keyword>
<keyword id="KW-0560">Oxidoreductase</keyword>
<keyword id="KW-0664">Pyridoxine biosynthesis</keyword>
<keyword id="KW-1185">Reference proteome</keyword>
<accession>A7MJQ2</accession>
<reference key="1">
    <citation type="journal article" date="2010" name="PLoS ONE">
        <title>Genome sequence of Cronobacter sakazakii BAA-894 and comparative genomic hybridization analysis with other Cronobacter species.</title>
        <authorList>
            <person name="Kucerova E."/>
            <person name="Clifton S.W."/>
            <person name="Xia X.Q."/>
            <person name="Long F."/>
            <person name="Porwollik S."/>
            <person name="Fulton L."/>
            <person name="Fronick C."/>
            <person name="Minx P."/>
            <person name="Kyung K."/>
            <person name="Warren W."/>
            <person name="Fulton R."/>
            <person name="Feng D."/>
            <person name="Wollam A."/>
            <person name="Shah N."/>
            <person name="Bhonagiri V."/>
            <person name="Nash W.E."/>
            <person name="Hallsworth-Pepin K."/>
            <person name="Wilson R.K."/>
            <person name="McClelland M."/>
            <person name="Forsythe S.J."/>
        </authorList>
    </citation>
    <scope>NUCLEOTIDE SEQUENCE [LARGE SCALE GENOMIC DNA]</scope>
    <source>
        <strain>ATCC BAA-894</strain>
    </source>
</reference>
<evidence type="ECO:0000255" key="1">
    <source>
        <dbReference type="HAMAP-Rule" id="MF_01640"/>
    </source>
</evidence>
<sequence>MTLRVAINGFGRIGRNVVRALYESGRRAEISVVAINELADAAGMAHLLKYDTSHGRFAWDVRQEGEQLWIGNDVIRLLHERDINALPWKALDVDVVLDCTGVYGSRADGIAHLEAGARKVLFSHPGGNDLDATVVYGVNEEELRAEHRIVSNASCTTNCIIPIIKLMDDAFGIESGTVTTIHSAMHDQQVIDAYHPDLRRTRAASQSIIPVDTRLAAGITRIFPKFHDRFEAIAVRVPTINVTAIDLSVTVQKPVKAYEVNLLLQKAAQGAFHGIVDYTELPLVSTDFNHDPHSAIVDGTQTRVSGAHLIKTLVWCDNEWGFANRMLDTTLAMAAIGFR</sequence>
<proteinExistence type="inferred from homology"/>
<protein>
    <recommendedName>
        <fullName evidence="1">D-erythrose-4-phosphate dehydrogenase</fullName>
        <shortName evidence="1">E4PDH</shortName>
        <ecNumber evidence="1">1.2.1.72</ecNumber>
    </recommendedName>
</protein>
<dbReference type="EC" id="1.2.1.72" evidence="1"/>
<dbReference type="EMBL" id="CP000783">
    <property type="protein sequence ID" value="ABU75706.1"/>
    <property type="molecule type" value="Genomic_DNA"/>
</dbReference>
<dbReference type="RefSeq" id="WP_004385647.1">
    <property type="nucleotide sequence ID" value="NC_009778.1"/>
</dbReference>
<dbReference type="SMR" id="A7MJQ2"/>
<dbReference type="KEGG" id="esa:ESA_00408"/>
<dbReference type="HOGENOM" id="CLU_030140_0_0_6"/>
<dbReference type="UniPathway" id="UPA00244">
    <property type="reaction ID" value="UER00309"/>
</dbReference>
<dbReference type="Proteomes" id="UP000000260">
    <property type="component" value="Chromosome"/>
</dbReference>
<dbReference type="GO" id="GO:0005737">
    <property type="term" value="C:cytoplasm"/>
    <property type="evidence" value="ECO:0007669"/>
    <property type="project" value="UniProtKB-SubCell"/>
</dbReference>
<dbReference type="GO" id="GO:0048001">
    <property type="term" value="F:erythrose-4-phosphate dehydrogenase activity"/>
    <property type="evidence" value="ECO:0007669"/>
    <property type="project" value="UniProtKB-UniRule"/>
</dbReference>
<dbReference type="GO" id="GO:0051287">
    <property type="term" value="F:NAD binding"/>
    <property type="evidence" value="ECO:0007669"/>
    <property type="project" value="InterPro"/>
</dbReference>
<dbReference type="GO" id="GO:0042823">
    <property type="term" value="P:pyridoxal phosphate biosynthetic process"/>
    <property type="evidence" value="ECO:0007669"/>
    <property type="project" value="UniProtKB-UniRule"/>
</dbReference>
<dbReference type="GO" id="GO:0008615">
    <property type="term" value="P:pyridoxine biosynthetic process"/>
    <property type="evidence" value="ECO:0007669"/>
    <property type="project" value="UniProtKB-UniRule"/>
</dbReference>
<dbReference type="CDD" id="cd23937">
    <property type="entry name" value="GAPDH_C_E4PDH"/>
    <property type="match status" value="1"/>
</dbReference>
<dbReference type="CDD" id="cd17892">
    <property type="entry name" value="GAPDH_N_E4PDH"/>
    <property type="match status" value="1"/>
</dbReference>
<dbReference type="FunFam" id="3.30.360.10:FF:000007">
    <property type="entry name" value="D-erythrose-4-phosphate dehydrogenase"/>
    <property type="match status" value="1"/>
</dbReference>
<dbReference type="FunFam" id="3.40.50.720:FF:000001">
    <property type="entry name" value="Glyceraldehyde-3-phosphate dehydrogenase"/>
    <property type="match status" value="1"/>
</dbReference>
<dbReference type="Gene3D" id="3.30.360.10">
    <property type="entry name" value="Dihydrodipicolinate Reductase, domain 2"/>
    <property type="match status" value="1"/>
</dbReference>
<dbReference type="Gene3D" id="3.40.50.720">
    <property type="entry name" value="NAD(P)-binding Rossmann-like Domain"/>
    <property type="match status" value="1"/>
</dbReference>
<dbReference type="HAMAP" id="MF_01640">
    <property type="entry name" value="E4P_dehydrog"/>
    <property type="match status" value="1"/>
</dbReference>
<dbReference type="InterPro" id="IPR006422">
    <property type="entry name" value="E4P_DH_bac"/>
</dbReference>
<dbReference type="InterPro" id="IPR020831">
    <property type="entry name" value="GlycerAld/Erythrose_P_DH"/>
</dbReference>
<dbReference type="InterPro" id="IPR020830">
    <property type="entry name" value="GlycerAld_3-P_DH_AS"/>
</dbReference>
<dbReference type="InterPro" id="IPR020829">
    <property type="entry name" value="GlycerAld_3-P_DH_cat"/>
</dbReference>
<dbReference type="InterPro" id="IPR020828">
    <property type="entry name" value="GlycerAld_3-P_DH_NAD(P)-bd"/>
</dbReference>
<dbReference type="InterPro" id="IPR036291">
    <property type="entry name" value="NAD(P)-bd_dom_sf"/>
</dbReference>
<dbReference type="NCBIfam" id="TIGR01532">
    <property type="entry name" value="E4PD_g-proteo"/>
    <property type="match status" value="1"/>
</dbReference>
<dbReference type="NCBIfam" id="NF010058">
    <property type="entry name" value="PRK13535.1"/>
    <property type="match status" value="1"/>
</dbReference>
<dbReference type="PANTHER" id="PTHR43148">
    <property type="entry name" value="GLYCERALDEHYDE-3-PHOSPHATE DEHYDROGENASE 2"/>
    <property type="match status" value="1"/>
</dbReference>
<dbReference type="Pfam" id="PF02800">
    <property type="entry name" value="Gp_dh_C"/>
    <property type="match status" value="1"/>
</dbReference>
<dbReference type="Pfam" id="PF00044">
    <property type="entry name" value="Gp_dh_N"/>
    <property type="match status" value="1"/>
</dbReference>
<dbReference type="PIRSF" id="PIRSF000149">
    <property type="entry name" value="GAP_DH"/>
    <property type="match status" value="1"/>
</dbReference>
<dbReference type="PRINTS" id="PR00078">
    <property type="entry name" value="G3PDHDRGNASE"/>
</dbReference>
<dbReference type="SMART" id="SM00846">
    <property type="entry name" value="Gp_dh_N"/>
    <property type="match status" value="1"/>
</dbReference>
<dbReference type="SUPFAM" id="SSF55347">
    <property type="entry name" value="Glyceraldehyde-3-phosphate dehydrogenase-like, C-terminal domain"/>
    <property type="match status" value="1"/>
</dbReference>
<dbReference type="SUPFAM" id="SSF51735">
    <property type="entry name" value="NAD(P)-binding Rossmann-fold domains"/>
    <property type="match status" value="1"/>
</dbReference>
<dbReference type="PROSITE" id="PS00071">
    <property type="entry name" value="GAPDH"/>
    <property type="match status" value="1"/>
</dbReference>
<feature type="chain" id="PRO_1000069895" description="D-erythrose-4-phosphate dehydrogenase">
    <location>
        <begin position="1"/>
        <end position="339"/>
    </location>
</feature>
<feature type="active site" description="Nucleophile" evidence="1">
    <location>
        <position position="155"/>
    </location>
</feature>
<feature type="binding site" evidence="1">
    <location>
        <begin position="12"/>
        <end position="13"/>
    </location>
    <ligand>
        <name>NAD(+)</name>
        <dbReference type="ChEBI" id="CHEBI:57540"/>
    </ligand>
</feature>
<feature type="binding site" evidence="1">
    <location>
        <position position="81"/>
    </location>
    <ligand>
        <name>NAD(+)</name>
        <dbReference type="ChEBI" id="CHEBI:57540"/>
    </ligand>
</feature>
<feature type="binding site" evidence="1">
    <location>
        <begin position="154"/>
        <end position="156"/>
    </location>
    <ligand>
        <name>substrate</name>
    </ligand>
</feature>
<feature type="binding site" evidence="1">
    <location>
        <position position="200"/>
    </location>
    <ligand>
        <name>substrate</name>
    </ligand>
</feature>
<feature type="binding site" evidence="1">
    <location>
        <begin position="213"/>
        <end position="214"/>
    </location>
    <ligand>
        <name>substrate</name>
    </ligand>
</feature>
<feature type="binding site" evidence="1">
    <location>
        <position position="236"/>
    </location>
    <ligand>
        <name>substrate</name>
    </ligand>
</feature>
<feature type="binding site" evidence="1">
    <location>
        <position position="318"/>
    </location>
    <ligand>
        <name>NAD(+)</name>
        <dbReference type="ChEBI" id="CHEBI:57540"/>
    </ligand>
</feature>
<feature type="site" description="Activates thiol group during catalysis" evidence="1">
    <location>
        <position position="182"/>
    </location>
</feature>
<gene>
    <name evidence="1" type="primary">epd</name>
    <name type="ordered locus">ESA_00408</name>
</gene>
<comment type="function">
    <text evidence="1">Catalyzes the NAD-dependent conversion of D-erythrose 4-phosphate to 4-phosphoerythronate.</text>
</comment>
<comment type="catalytic activity">
    <reaction evidence="1">
        <text>D-erythrose 4-phosphate + NAD(+) + H2O = 4-phospho-D-erythronate + NADH + 2 H(+)</text>
        <dbReference type="Rhea" id="RHEA:12056"/>
        <dbReference type="ChEBI" id="CHEBI:15377"/>
        <dbReference type="ChEBI" id="CHEBI:15378"/>
        <dbReference type="ChEBI" id="CHEBI:16897"/>
        <dbReference type="ChEBI" id="CHEBI:57540"/>
        <dbReference type="ChEBI" id="CHEBI:57945"/>
        <dbReference type="ChEBI" id="CHEBI:58766"/>
        <dbReference type="EC" id="1.2.1.72"/>
    </reaction>
</comment>
<comment type="pathway">
    <text evidence="1">Cofactor biosynthesis; pyridoxine 5'-phosphate biosynthesis; pyridoxine 5'-phosphate from D-erythrose 4-phosphate: step 1/5.</text>
</comment>
<comment type="subunit">
    <text evidence="1">Homotetramer.</text>
</comment>
<comment type="subcellular location">
    <subcellularLocation>
        <location evidence="1">Cytoplasm</location>
    </subcellularLocation>
</comment>
<comment type="similarity">
    <text evidence="1">Belongs to the glyceraldehyde-3-phosphate dehydrogenase family. Epd subfamily.</text>
</comment>
<organism>
    <name type="scientific">Cronobacter sakazakii (strain ATCC BAA-894)</name>
    <name type="common">Enterobacter sakazakii</name>
    <dbReference type="NCBI Taxonomy" id="290339"/>
    <lineage>
        <taxon>Bacteria</taxon>
        <taxon>Pseudomonadati</taxon>
        <taxon>Pseudomonadota</taxon>
        <taxon>Gammaproteobacteria</taxon>
        <taxon>Enterobacterales</taxon>
        <taxon>Enterobacteriaceae</taxon>
        <taxon>Cronobacter</taxon>
    </lineage>
</organism>
<name>E4PD_CROS8</name>